<evidence type="ECO:0000250" key="1"/>
<evidence type="ECO:0000255" key="2">
    <source>
        <dbReference type="PROSITE-ProRule" id="PRU00389"/>
    </source>
</evidence>
<evidence type="ECO:0000305" key="3"/>
<accession>Q5RA30</accession>
<keyword id="KW-0597">Phosphoprotein</keyword>
<keyword id="KW-1185">Reference proteome</keyword>
<sequence>MATNFSDIVKQGYVKMKSRKLGIYRRCWLVFRKSSSKGPQRLEKYPDEKSVCLRGCPKVTEISNVKCVTRLPKETKRQAVAIIFTDDSARTFTCDSELEAEEWYKTLSVECLGSRLNDISLGEPDLLAPGVQCEQTDRFNVFLLPCPNLDVYGECKLQITHENIYLWDIHNPRVKLVSWPLCSLRRYGRDAARFTFEAGRMCDAGEGLYTFQTQEGEQIYQRVHSATLAIAEQHKRVLLEMEKNVRLLNKGTEHYSYPCTPTTMLPRSAYWHHITGSQNIAEASSYAAQGPEQQVASQFLWAWSDTGRICASTVLLASLAVGVLSRGDIWLTPQVKIWF</sequence>
<reference key="1">
    <citation type="submission" date="2004-11" db="EMBL/GenBank/DDBJ databases">
        <authorList>
            <consortium name="The German cDNA consortium"/>
        </authorList>
    </citation>
    <scope>NUCLEOTIDE SEQUENCE [LARGE SCALE MRNA]</scope>
    <source>
        <tissue>Brain cortex</tissue>
    </source>
</reference>
<protein>
    <recommendedName>
        <fullName>Docking protein 4</fullName>
    </recommendedName>
    <alternativeName>
        <fullName>Downstream of tyrosine kinase 4</fullName>
    </alternativeName>
</protein>
<comment type="function">
    <text evidence="1">DOK proteins are enzymatically inert adaptor or scaffolding proteins. They provide a docking platform for the assembly of multimolecular signaling complexes. DOK4 functions in RET-mediated neurite outgrowth and plays a positive role in activation of the MAP kinase pathway (By similarity). Putative link with downstream effectors of RET in neuronal differentiation. May be involved in the regulation of the immune response induced by T-cells (By similarity).</text>
</comment>
<comment type="subunit">
    <text evidence="1">Interacts with RET and TEK/TIE2. Interaction with RET is mediated through the PTB domain and requires phosphorylation of RET (By similarity).</text>
</comment>
<comment type="domain">
    <text evidence="1">PTB domain mediates receptor interaction.</text>
</comment>
<comment type="PTM">
    <text evidence="1">Phosphorylated on tyrosine residues in response to insulin, IGF1 or RET stimulation.</text>
</comment>
<comment type="similarity">
    <text evidence="3">Belongs to the DOK family. Type B subfamily.</text>
</comment>
<proteinExistence type="evidence at transcript level"/>
<feature type="chain" id="PRO_0000187276" description="Docking protein 4">
    <location>
        <begin position="1"/>
        <end position="339"/>
    </location>
</feature>
<feature type="domain" description="PH">
    <location>
        <begin position="7"/>
        <end position="112"/>
    </location>
</feature>
<feature type="domain" description="IRS-type PTB" evidence="2">
    <location>
        <begin position="132"/>
        <end position="237"/>
    </location>
</feature>
<feature type="short sequence motif" description="DKFBH motif">
    <location>
        <begin position="265"/>
        <end position="275"/>
    </location>
</feature>
<name>DOK4_PONAB</name>
<dbReference type="EMBL" id="CR859193">
    <property type="protein sequence ID" value="CAH91380.1"/>
    <property type="molecule type" value="mRNA"/>
</dbReference>
<dbReference type="RefSeq" id="NP_001125815.1">
    <property type="nucleotide sequence ID" value="NM_001132343.1"/>
</dbReference>
<dbReference type="SMR" id="Q5RA30"/>
<dbReference type="STRING" id="9601.ENSPPYP00000008351"/>
<dbReference type="GeneID" id="100172743"/>
<dbReference type="KEGG" id="pon:100172743"/>
<dbReference type="CTD" id="55715"/>
<dbReference type="eggNOG" id="KOG4047">
    <property type="taxonomic scope" value="Eukaryota"/>
</dbReference>
<dbReference type="InParanoid" id="Q5RA30"/>
<dbReference type="OrthoDB" id="6279276at2759"/>
<dbReference type="Proteomes" id="UP000001595">
    <property type="component" value="Unplaced"/>
</dbReference>
<dbReference type="GO" id="GO:0005737">
    <property type="term" value="C:cytoplasm"/>
    <property type="evidence" value="ECO:0007669"/>
    <property type="project" value="TreeGrafter"/>
</dbReference>
<dbReference type="GO" id="GO:0007169">
    <property type="term" value="P:cell surface receptor protein tyrosine kinase signaling pathway"/>
    <property type="evidence" value="ECO:0007669"/>
    <property type="project" value="TreeGrafter"/>
</dbReference>
<dbReference type="CDD" id="cd14678">
    <property type="entry name" value="PH_DOK4_DOK5_DOK6"/>
    <property type="match status" value="1"/>
</dbReference>
<dbReference type="CDD" id="cd13164">
    <property type="entry name" value="PTB_DOK4_DOK5_DOK6"/>
    <property type="match status" value="1"/>
</dbReference>
<dbReference type="FunFam" id="2.30.29.30:FF:000110">
    <property type="entry name" value="Docking protein 4"/>
    <property type="match status" value="1"/>
</dbReference>
<dbReference type="FunFam" id="2.30.29.30:FF:000082">
    <property type="entry name" value="Docking protein 5"/>
    <property type="match status" value="1"/>
</dbReference>
<dbReference type="Gene3D" id="2.30.29.30">
    <property type="entry name" value="Pleckstrin-homology domain (PH domain)/Phosphotyrosine-binding domain (PTB)"/>
    <property type="match status" value="2"/>
</dbReference>
<dbReference type="InterPro" id="IPR050996">
    <property type="entry name" value="Docking_Protein_DOK"/>
</dbReference>
<dbReference type="InterPro" id="IPR037816">
    <property type="entry name" value="DOK4/5/6_PH"/>
</dbReference>
<dbReference type="InterPro" id="IPR002404">
    <property type="entry name" value="IRS_PTB"/>
</dbReference>
<dbReference type="InterPro" id="IPR011993">
    <property type="entry name" value="PH-like_dom_sf"/>
</dbReference>
<dbReference type="InterPro" id="IPR001849">
    <property type="entry name" value="PH_domain"/>
</dbReference>
<dbReference type="PANTHER" id="PTHR21258:SF44">
    <property type="entry name" value="DOCKING PROTEIN 4"/>
    <property type="match status" value="1"/>
</dbReference>
<dbReference type="PANTHER" id="PTHR21258">
    <property type="entry name" value="DOCKING PROTEIN RELATED"/>
    <property type="match status" value="1"/>
</dbReference>
<dbReference type="Pfam" id="PF02174">
    <property type="entry name" value="IRS"/>
    <property type="match status" value="1"/>
</dbReference>
<dbReference type="Pfam" id="PF00169">
    <property type="entry name" value="PH"/>
    <property type="match status" value="1"/>
</dbReference>
<dbReference type="SMART" id="SM01244">
    <property type="entry name" value="IRS"/>
    <property type="match status" value="1"/>
</dbReference>
<dbReference type="SMART" id="SM00233">
    <property type="entry name" value="PH"/>
    <property type="match status" value="1"/>
</dbReference>
<dbReference type="SMART" id="SM00310">
    <property type="entry name" value="PTBI"/>
    <property type="match status" value="1"/>
</dbReference>
<dbReference type="SUPFAM" id="SSF50729">
    <property type="entry name" value="PH domain-like"/>
    <property type="match status" value="2"/>
</dbReference>
<dbReference type="PROSITE" id="PS51064">
    <property type="entry name" value="IRS_PTB"/>
    <property type="match status" value="1"/>
</dbReference>
<organism>
    <name type="scientific">Pongo abelii</name>
    <name type="common">Sumatran orangutan</name>
    <name type="synonym">Pongo pygmaeus abelii</name>
    <dbReference type="NCBI Taxonomy" id="9601"/>
    <lineage>
        <taxon>Eukaryota</taxon>
        <taxon>Metazoa</taxon>
        <taxon>Chordata</taxon>
        <taxon>Craniata</taxon>
        <taxon>Vertebrata</taxon>
        <taxon>Euteleostomi</taxon>
        <taxon>Mammalia</taxon>
        <taxon>Eutheria</taxon>
        <taxon>Euarchontoglires</taxon>
        <taxon>Primates</taxon>
        <taxon>Haplorrhini</taxon>
        <taxon>Catarrhini</taxon>
        <taxon>Hominidae</taxon>
        <taxon>Pongo</taxon>
    </lineage>
</organism>
<gene>
    <name type="primary">DOK4</name>
</gene>